<name>FERV_TRIV2</name>
<accession>P46047</accession>
<accession>Q3M579</accession>
<gene>
    <name type="primary">fdxH2</name>
    <name type="ordered locus">Ava_4258</name>
</gene>
<feature type="initiator methionine" description="Removed" evidence="1">
    <location>
        <position position="1"/>
    </location>
</feature>
<feature type="chain" id="PRO_0000189304" description="Ferredoxin, vegetative">
    <location>
        <begin position="2"/>
        <end position="99"/>
    </location>
</feature>
<feature type="domain" description="2Fe-2S ferredoxin-type" evidence="2">
    <location>
        <begin position="4"/>
        <end position="96"/>
    </location>
</feature>
<feature type="binding site" evidence="2">
    <location>
        <position position="42"/>
    </location>
    <ligand>
        <name>[2Fe-2S] cluster</name>
        <dbReference type="ChEBI" id="CHEBI:190135"/>
    </ligand>
</feature>
<feature type="binding site" evidence="2">
    <location>
        <position position="47"/>
    </location>
    <ligand>
        <name>[2Fe-2S] cluster</name>
        <dbReference type="ChEBI" id="CHEBI:190135"/>
    </ligand>
</feature>
<feature type="binding site" evidence="2">
    <location>
        <position position="50"/>
    </location>
    <ligand>
        <name>[2Fe-2S] cluster</name>
        <dbReference type="ChEBI" id="CHEBI:190135"/>
    </ligand>
</feature>
<feature type="binding site" evidence="2">
    <location>
        <position position="80"/>
    </location>
    <ligand>
        <name>[2Fe-2S] cluster</name>
        <dbReference type="ChEBI" id="CHEBI:190135"/>
    </ligand>
</feature>
<reference key="1">
    <citation type="journal article" date="1995" name="Mol. Microbiol.">
        <title>Distinct and differently regulated Mo-dependent nitrogen-fixing systems evolved for heterocysts and vegetative cells of Anabaena variabilis ATCC 29413: characterization of the fdxH1/2 gene regions as part of the nif1/2 gene clusters.</title>
        <authorList>
            <person name="Schrautemeier B."/>
            <person name="Neveling U."/>
            <person name="Schmitz S."/>
        </authorList>
    </citation>
    <scope>NUCLEOTIDE SEQUENCE [GENOMIC DNA]</scope>
</reference>
<reference key="2">
    <citation type="journal article" date="2014" name="Stand. Genomic Sci.">
        <title>Complete genome sequence of Anabaena variabilis ATCC 29413.</title>
        <authorList>
            <person name="Thiel T."/>
            <person name="Pratte B.S."/>
            <person name="Zhong J."/>
            <person name="Goodwin L."/>
            <person name="Copeland A."/>
            <person name="Lucas S."/>
            <person name="Han C."/>
            <person name="Pitluck S."/>
            <person name="Land M.L."/>
            <person name="Kyrpides N.C."/>
            <person name="Woyke T."/>
        </authorList>
    </citation>
    <scope>NUCLEOTIDE SEQUENCE [LARGE SCALE GENOMIC DNA]</scope>
    <source>
        <strain>ATCC 29413 / PCC 7937</strain>
    </source>
</reference>
<keyword id="KW-0001">2Fe-2S</keyword>
<keyword id="KW-0249">Electron transport</keyword>
<keyword id="KW-0408">Iron</keyword>
<keyword id="KW-0411">Iron-sulfur</keyword>
<keyword id="KW-0479">Metal-binding</keyword>
<keyword id="KW-0535">Nitrogen fixation</keyword>
<keyword id="KW-0813">Transport</keyword>
<proteinExistence type="evidence at transcript level"/>
<comment type="function">
    <text>Ferredoxins are iron-sulfur proteins that transfer electrons in a wide variety of metabolic reactions. Donates electrons to the nitrogenase 2.</text>
</comment>
<comment type="cofactor">
    <cofactor>
        <name>[2Fe-2S] cluster</name>
        <dbReference type="ChEBI" id="CHEBI:190135"/>
    </cofactor>
    <text>Binds 1 [2Fe-2S] cluster.</text>
</comment>
<comment type="developmental stage">
    <text>Expressed exclusively within vegetative cells.</text>
</comment>
<comment type="similarity">
    <text evidence="3">Belongs to the 2Fe2S plant-type ferredoxin family.</text>
</comment>
<sequence>MTTYQVRLINKKRAIDITIPVDENTTILDAAEQQDIELPFSCQSGSCSSCVAKVVEGEVDQSEQVFLDEEQMAKGFIVLCVSYPRSDCTIRTHQEPYLV</sequence>
<evidence type="ECO:0000250" key="1"/>
<evidence type="ECO:0000255" key="2">
    <source>
        <dbReference type="PROSITE-ProRule" id="PRU00465"/>
    </source>
</evidence>
<evidence type="ECO:0000305" key="3"/>
<protein>
    <recommendedName>
        <fullName>Ferredoxin, vegetative</fullName>
    </recommendedName>
</protein>
<dbReference type="EMBL" id="Z46890">
    <property type="protein sequence ID" value="CAA86991.1"/>
    <property type="molecule type" value="Genomic_DNA"/>
</dbReference>
<dbReference type="EMBL" id="CP000117">
    <property type="protein sequence ID" value="ABA23857.1"/>
    <property type="molecule type" value="Genomic_DNA"/>
</dbReference>
<dbReference type="PIR" id="S49996">
    <property type="entry name" value="S49996"/>
</dbReference>
<dbReference type="SMR" id="P46047"/>
<dbReference type="STRING" id="240292.Ava_4258"/>
<dbReference type="KEGG" id="ava:Ava_4258"/>
<dbReference type="eggNOG" id="COG0633">
    <property type="taxonomic scope" value="Bacteria"/>
</dbReference>
<dbReference type="HOGENOM" id="CLU_082632_7_3_3"/>
<dbReference type="Proteomes" id="UP000002533">
    <property type="component" value="Chromosome"/>
</dbReference>
<dbReference type="GO" id="GO:0051537">
    <property type="term" value="F:2 iron, 2 sulfur cluster binding"/>
    <property type="evidence" value="ECO:0007669"/>
    <property type="project" value="UniProtKB-KW"/>
</dbReference>
<dbReference type="GO" id="GO:0009055">
    <property type="term" value="F:electron transfer activity"/>
    <property type="evidence" value="ECO:0007669"/>
    <property type="project" value="InterPro"/>
</dbReference>
<dbReference type="GO" id="GO:0046872">
    <property type="term" value="F:metal ion binding"/>
    <property type="evidence" value="ECO:0007669"/>
    <property type="project" value="UniProtKB-KW"/>
</dbReference>
<dbReference type="GO" id="GO:0022900">
    <property type="term" value="P:electron transport chain"/>
    <property type="evidence" value="ECO:0007669"/>
    <property type="project" value="InterPro"/>
</dbReference>
<dbReference type="GO" id="GO:0009399">
    <property type="term" value="P:nitrogen fixation"/>
    <property type="evidence" value="ECO:0007669"/>
    <property type="project" value="UniProtKB-KW"/>
</dbReference>
<dbReference type="CDD" id="cd00207">
    <property type="entry name" value="fer2"/>
    <property type="match status" value="1"/>
</dbReference>
<dbReference type="Gene3D" id="3.10.20.30">
    <property type="match status" value="1"/>
</dbReference>
<dbReference type="InterPro" id="IPR036010">
    <property type="entry name" value="2Fe-2S_ferredoxin-like_sf"/>
</dbReference>
<dbReference type="InterPro" id="IPR001041">
    <property type="entry name" value="2Fe-2S_ferredoxin-type"/>
</dbReference>
<dbReference type="InterPro" id="IPR006058">
    <property type="entry name" value="2Fe2S_fd_BS"/>
</dbReference>
<dbReference type="InterPro" id="IPR012675">
    <property type="entry name" value="Beta-grasp_dom_sf"/>
</dbReference>
<dbReference type="InterPro" id="IPR010241">
    <property type="entry name" value="Fd_pln"/>
</dbReference>
<dbReference type="NCBIfam" id="TIGR02008">
    <property type="entry name" value="fdx_plant"/>
    <property type="match status" value="1"/>
</dbReference>
<dbReference type="PANTHER" id="PTHR43112">
    <property type="entry name" value="FERREDOXIN"/>
    <property type="match status" value="1"/>
</dbReference>
<dbReference type="PANTHER" id="PTHR43112:SF3">
    <property type="entry name" value="FERREDOXIN-2, CHLOROPLASTIC"/>
    <property type="match status" value="1"/>
</dbReference>
<dbReference type="Pfam" id="PF00111">
    <property type="entry name" value="Fer2"/>
    <property type="match status" value="1"/>
</dbReference>
<dbReference type="SUPFAM" id="SSF54292">
    <property type="entry name" value="2Fe-2S ferredoxin-like"/>
    <property type="match status" value="1"/>
</dbReference>
<dbReference type="PROSITE" id="PS00197">
    <property type="entry name" value="2FE2S_FER_1"/>
    <property type="match status" value="1"/>
</dbReference>
<dbReference type="PROSITE" id="PS51085">
    <property type="entry name" value="2FE2S_FER_2"/>
    <property type="match status" value="1"/>
</dbReference>
<organism>
    <name type="scientific">Trichormus variabilis (strain ATCC 29413 / PCC 7937)</name>
    <name type="common">Anabaena variabilis</name>
    <dbReference type="NCBI Taxonomy" id="240292"/>
    <lineage>
        <taxon>Bacteria</taxon>
        <taxon>Bacillati</taxon>
        <taxon>Cyanobacteriota</taxon>
        <taxon>Cyanophyceae</taxon>
        <taxon>Nostocales</taxon>
        <taxon>Nostocaceae</taxon>
        <taxon>Trichormus</taxon>
    </lineage>
</organism>